<evidence type="ECO:0000255" key="1">
    <source>
        <dbReference type="HAMAP-Rule" id="MF_00104"/>
    </source>
</evidence>
<accession>Q5E314</accession>
<name>RNC_ALIF1</name>
<feature type="chain" id="PRO_0000228601" description="Ribonuclease 3">
    <location>
        <begin position="1"/>
        <end position="223"/>
    </location>
</feature>
<feature type="domain" description="RNase III" evidence="1">
    <location>
        <begin position="5"/>
        <end position="127"/>
    </location>
</feature>
<feature type="domain" description="DRBM" evidence="1">
    <location>
        <begin position="154"/>
        <end position="223"/>
    </location>
</feature>
<feature type="active site" evidence="1">
    <location>
        <position position="44"/>
    </location>
</feature>
<feature type="active site" evidence="1">
    <location>
        <position position="116"/>
    </location>
</feature>
<feature type="binding site" evidence="1">
    <location>
        <position position="40"/>
    </location>
    <ligand>
        <name>Mg(2+)</name>
        <dbReference type="ChEBI" id="CHEBI:18420"/>
    </ligand>
</feature>
<feature type="binding site" evidence="1">
    <location>
        <position position="113"/>
    </location>
    <ligand>
        <name>Mg(2+)</name>
        <dbReference type="ChEBI" id="CHEBI:18420"/>
    </ligand>
</feature>
<feature type="binding site" evidence="1">
    <location>
        <position position="116"/>
    </location>
    <ligand>
        <name>Mg(2+)</name>
        <dbReference type="ChEBI" id="CHEBI:18420"/>
    </ligand>
</feature>
<reference key="1">
    <citation type="journal article" date="2005" name="Proc. Natl. Acad. Sci. U.S.A.">
        <title>Complete genome sequence of Vibrio fischeri: a symbiotic bacterium with pathogenic congeners.</title>
        <authorList>
            <person name="Ruby E.G."/>
            <person name="Urbanowski M."/>
            <person name="Campbell J."/>
            <person name="Dunn A."/>
            <person name="Faini M."/>
            <person name="Gunsalus R."/>
            <person name="Lostroh P."/>
            <person name="Lupp C."/>
            <person name="McCann J."/>
            <person name="Millikan D."/>
            <person name="Schaefer A."/>
            <person name="Stabb E."/>
            <person name="Stevens A."/>
            <person name="Visick K."/>
            <person name="Whistler C."/>
            <person name="Greenberg E.P."/>
        </authorList>
    </citation>
    <scope>NUCLEOTIDE SEQUENCE [LARGE SCALE GENOMIC DNA]</scope>
    <source>
        <strain>ATCC 700601 / ES114</strain>
    </source>
</reference>
<proteinExistence type="inferred from homology"/>
<sequence>MNSSLQRLEKKIGYQFKDESFLKLALTHRSANGTHNERLEFLGDSILSFVVADDLYHRFPKVDEGDMSRMRATLVRGHTLAELGREFQLGDYLYLGPGELKSGGFRRDSILADAVEAIIGAIYLDSDTETVRGIILSWYNTRLESIEPGVSQKDPKTRLQEYLQGRRKPLPTYTVTKIKGEAHNQEFTIECIVAGLDKPVIGKGSSRRKAEQSAADIALGQLN</sequence>
<comment type="function">
    <text evidence="1">Digests double-stranded RNA. Involved in the processing of primary rRNA transcript to yield the immediate precursors to the large and small rRNAs (23S and 16S). Processes some mRNAs, and tRNAs when they are encoded in the rRNA operon. Processes pre-crRNA and tracrRNA of type II CRISPR loci if present in the organism.</text>
</comment>
<comment type="catalytic activity">
    <reaction evidence="1">
        <text>Endonucleolytic cleavage to 5'-phosphomonoester.</text>
        <dbReference type="EC" id="3.1.26.3"/>
    </reaction>
</comment>
<comment type="cofactor">
    <cofactor evidence="1">
        <name>Mg(2+)</name>
        <dbReference type="ChEBI" id="CHEBI:18420"/>
    </cofactor>
</comment>
<comment type="subunit">
    <text evidence="1">Homodimer.</text>
</comment>
<comment type="subcellular location">
    <subcellularLocation>
        <location evidence="1">Cytoplasm</location>
    </subcellularLocation>
</comment>
<comment type="similarity">
    <text evidence="1">Belongs to the ribonuclease III family.</text>
</comment>
<gene>
    <name evidence="1" type="primary">rnc</name>
    <name type="ordered locus">VF_2087</name>
</gene>
<organism>
    <name type="scientific">Aliivibrio fischeri (strain ATCC 700601 / ES114)</name>
    <name type="common">Vibrio fischeri</name>
    <dbReference type="NCBI Taxonomy" id="312309"/>
    <lineage>
        <taxon>Bacteria</taxon>
        <taxon>Pseudomonadati</taxon>
        <taxon>Pseudomonadota</taxon>
        <taxon>Gammaproteobacteria</taxon>
        <taxon>Vibrionales</taxon>
        <taxon>Vibrionaceae</taxon>
        <taxon>Aliivibrio</taxon>
    </lineage>
</organism>
<protein>
    <recommendedName>
        <fullName evidence="1">Ribonuclease 3</fullName>
        <ecNumber evidence="1">3.1.26.3</ecNumber>
    </recommendedName>
    <alternativeName>
        <fullName evidence="1">Ribonuclease III</fullName>
        <shortName evidence="1">RNase III</shortName>
    </alternativeName>
</protein>
<dbReference type="EC" id="3.1.26.3" evidence="1"/>
<dbReference type="EMBL" id="CP000020">
    <property type="protein sequence ID" value="AAW86582.1"/>
    <property type="molecule type" value="Genomic_DNA"/>
</dbReference>
<dbReference type="RefSeq" id="WP_005420714.1">
    <property type="nucleotide sequence ID" value="NZ_CAWLES010000001.1"/>
</dbReference>
<dbReference type="RefSeq" id="YP_205470.1">
    <property type="nucleotide sequence ID" value="NC_006840.2"/>
</dbReference>
<dbReference type="SMR" id="Q5E314"/>
<dbReference type="STRING" id="312309.VF_2087"/>
<dbReference type="EnsemblBacteria" id="AAW86582">
    <property type="protein sequence ID" value="AAW86582"/>
    <property type="gene ID" value="VF_2087"/>
</dbReference>
<dbReference type="GeneID" id="54164792"/>
<dbReference type="KEGG" id="vfi:VF_2087"/>
<dbReference type="PATRIC" id="fig|312309.11.peg.2129"/>
<dbReference type="eggNOG" id="COG0571">
    <property type="taxonomic scope" value="Bacteria"/>
</dbReference>
<dbReference type="HOGENOM" id="CLU_000907_1_1_6"/>
<dbReference type="OrthoDB" id="9805026at2"/>
<dbReference type="Proteomes" id="UP000000537">
    <property type="component" value="Chromosome I"/>
</dbReference>
<dbReference type="GO" id="GO:0005737">
    <property type="term" value="C:cytoplasm"/>
    <property type="evidence" value="ECO:0007669"/>
    <property type="project" value="UniProtKB-SubCell"/>
</dbReference>
<dbReference type="GO" id="GO:0003725">
    <property type="term" value="F:double-stranded RNA binding"/>
    <property type="evidence" value="ECO:0007669"/>
    <property type="project" value="TreeGrafter"/>
</dbReference>
<dbReference type="GO" id="GO:0046872">
    <property type="term" value="F:metal ion binding"/>
    <property type="evidence" value="ECO:0007669"/>
    <property type="project" value="UniProtKB-KW"/>
</dbReference>
<dbReference type="GO" id="GO:0004525">
    <property type="term" value="F:ribonuclease III activity"/>
    <property type="evidence" value="ECO:0007669"/>
    <property type="project" value="UniProtKB-UniRule"/>
</dbReference>
<dbReference type="GO" id="GO:0019843">
    <property type="term" value="F:rRNA binding"/>
    <property type="evidence" value="ECO:0007669"/>
    <property type="project" value="UniProtKB-KW"/>
</dbReference>
<dbReference type="GO" id="GO:0006397">
    <property type="term" value="P:mRNA processing"/>
    <property type="evidence" value="ECO:0007669"/>
    <property type="project" value="UniProtKB-UniRule"/>
</dbReference>
<dbReference type="GO" id="GO:0010468">
    <property type="term" value="P:regulation of gene expression"/>
    <property type="evidence" value="ECO:0007669"/>
    <property type="project" value="TreeGrafter"/>
</dbReference>
<dbReference type="GO" id="GO:0006364">
    <property type="term" value="P:rRNA processing"/>
    <property type="evidence" value="ECO:0007669"/>
    <property type="project" value="UniProtKB-UniRule"/>
</dbReference>
<dbReference type="GO" id="GO:0008033">
    <property type="term" value="P:tRNA processing"/>
    <property type="evidence" value="ECO:0007669"/>
    <property type="project" value="UniProtKB-KW"/>
</dbReference>
<dbReference type="CDD" id="cd10845">
    <property type="entry name" value="DSRM_RNAse_III_family"/>
    <property type="match status" value="1"/>
</dbReference>
<dbReference type="CDD" id="cd00593">
    <property type="entry name" value="RIBOc"/>
    <property type="match status" value="1"/>
</dbReference>
<dbReference type="FunFam" id="1.10.1520.10:FF:000001">
    <property type="entry name" value="Ribonuclease 3"/>
    <property type="match status" value="1"/>
</dbReference>
<dbReference type="FunFam" id="3.30.160.20:FF:000003">
    <property type="entry name" value="Ribonuclease 3"/>
    <property type="match status" value="1"/>
</dbReference>
<dbReference type="Gene3D" id="3.30.160.20">
    <property type="match status" value="1"/>
</dbReference>
<dbReference type="Gene3D" id="1.10.1520.10">
    <property type="entry name" value="Ribonuclease III domain"/>
    <property type="match status" value="1"/>
</dbReference>
<dbReference type="HAMAP" id="MF_00104">
    <property type="entry name" value="RNase_III"/>
    <property type="match status" value="1"/>
</dbReference>
<dbReference type="InterPro" id="IPR014720">
    <property type="entry name" value="dsRBD_dom"/>
</dbReference>
<dbReference type="InterPro" id="IPR011907">
    <property type="entry name" value="RNase_III"/>
</dbReference>
<dbReference type="InterPro" id="IPR000999">
    <property type="entry name" value="RNase_III_dom"/>
</dbReference>
<dbReference type="InterPro" id="IPR036389">
    <property type="entry name" value="RNase_III_sf"/>
</dbReference>
<dbReference type="NCBIfam" id="TIGR02191">
    <property type="entry name" value="RNaseIII"/>
    <property type="match status" value="1"/>
</dbReference>
<dbReference type="PANTHER" id="PTHR11207:SF0">
    <property type="entry name" value="RIBONUCLEASE 3"/>
    <property type="match status" value="1"/>
</dbReference>
<dbReference type="PANTHER" id="PTHR11207">
    <property type="entry name" value="RIBONUCLEASE III"/>
    <property type="match status" value="1"/>
</dbReference>
<dbReference type="Pfam" id="PF00035">
    <property type="entry name" value="dsrm"/>
    <property type="match status" value="1"/>
</dbReference>
<dbReference type="Pfam" id="PF14622">
    <property type="entry name" value="Ribonucleas_3_3"/>
    <property type="match status" value="1"/>
</dbReference>
<dbReference type="SMART" id="SM00358">
    <property type="entry name" value="DSRM"/>
    <property type="match status" value="1"/>
</dbReference>
<dbReference type="SMART" id="SM00535">
    <property type="entry name" value="RIBOc"/>
    <property type="match status" value="1"/>
</dbReference>
<dbReference type="SUPFAM" id="SSF54768">
    <property type="entry name" value="dsRNA-binding domain-like"/>
    <property type="match status" value="1"/>
</dbReference>
<dbReference type="SUPFAM" id="SSF69065">
    <property type="entry name" value="RNase III domain-like"/>
    <property type="match status" value="1"/>
</dbReference>
<dbReference type="PROSITE" id="PS50137">
    <property type="entry name" value="DS_RBD"/>
    <property type="match status" value="1"/>
</dbReference>
<dbReference type="PROSITE" id="PS00517">
    <property type="entry name" value="RNASE_3_1"/>
    <property type="match status" value="1"/>
</dbReference>
<dbReference type="PROSITE" id="PS50142">
    <property type="entry name" value="RNASE_3_2"/>
    <property type="match status" value="1"/>
</dbReference>
<keyword id="KW-0963">Cytoplasm</keyword>
<keyword id="KW-0255">Endonuclease</keyword>
<keyword id="KW-0378">Hydrolase</keyword>
<keyword id="KW-0460">Magnesium</keyword>
<keyword id="KW-0479">Metal-binding</keyword>
<keyword id="KW-0507">mRNA processing</keyword>
<keyword id="KW-0540">Nuclease</keyword>
<keyword id="KW-1185">Reference proteome</keyword>
<keyword id="KW-0694">RNA-binding</keyword>
<keyword id="KW-0698">rRNA processing</keyword>
<keyword id="KW-0699">rRNA-binding</keyword>
<keyword id="KW-0819">tRNA processing</keyword>